<evidence type="ECO:0000255" key="1">
    <source>
        <dbReference type="HAMAP-Rule" id="MF_00210"/>
    </source>
</evidence>
<evidence type="ECO:0000305" key="2"/>
<gene>
    <name evidence="1" type="primary">aroA</name>
    <name type="ordered locus">DR_1096</name>
</gene>
<name>AROA_DEIRA</name>
<proteinExistence type="inferred from homology"/>
<organism>
    <name type="scientific">Deinococcus radiodurans (strain ATCC 13939 / DSM 20539 / JCM 16871 / CCUG 27074 / LMG 4051 / NBRC 15346 / NCIMB 9279 / VKM B-1422 / R1)</name>
    <dbReference type="NCBI Taxonomy" id="243230"/>
    <lineage>
        <taxon>Bacteria</taxon>
        <taxon>Thermotogati</taxon>
        <taxon>Deinococcota</taxon>
        <taxon>Deinococci</taxon>
        <taxon>Deinococcales</taxon>
        <taxon>Deinococcaceae</taxon>
        <taxon>Deinococcus</taxon>
    </lineage>
</organism>
<protein>
    <recommendedName>
        <fullName evidence="1">3-phosphoshikimate 1-carboxyvinyltransferase</fullName>
        <ecNumber evidence="1">2.5.1.19</ecNumber>
    </recommendedName>
    <alternativeName>
        <fullName evidence="1">5-enolpyruvylshikimate-3-phosphate synthase</fullName>
        <shortName evidence="1">EPSP synthase</shortName>
        <shortName evidence="1">EPSPS</shortName>
    </alternativeName>
</protein>
<feature type="chain" id="PRO_0000088252" description="3-phosphoshikimate 1-carboxyvinyltransferase">
    <location>
        <begin position="1"/>
        <end position="439"/>
    </location>
</feature>
<feature type="active site" description="Proton acceptor" evidence="1">
    <location>
        <position position="316"/>
    </location>
</feature>
<feature type="binding site" evidence="1">
    <location>
        <position position="29"/>
    </location>
    <ligand>
        <name>3-phosphoshikimate</name>
        <dbReference type="ChEBI" id="CHEBI:145989"/>
    </ligand>
</feature>
<feature type="binding site" evidence="1">
    <location>
        <position position="29"/>
    </location>
    <ligand>
        <name>phosphoenolpyruvate</name>
        <dbReference type="ChEBI" id="CHEBI:58702"/>
    </ligand>
</feature>
<feature type="binding site" evidence="1">
    <location>
        <position position="34"/>
    </location>
    <ligand>
        <name>3-phosphoshikimate</name>
        <dbReference type="ChEBI" id="CHEBI:145989"/>
    </ligand>
</feature>
<feature type="binding site" evidence="1">
    <location>
        <position position="99"/>
    </location>
    <ligand>
        <name>phosphoenolpyruvate</name>
        <dbReference type="ChEBI" id="CHEBI:58702"/>
    </ligand>
</feature>
<feature type="binding site" evidence="1">
    <location>
        <position position="128"/>
    </location>
    <ligand>
        <name>phosphoenolpyruvate</name>
        <dbReference type="ChEBI" id="CHEBI:58702"/>
    </ligand>
</feature>
<feature type="binding site" evidence="1">
    <location>
        <position position="171"/>
    </location>
    <ligand>
        <name>3-phosphoshikimate</name>
        <dbReference type="ChEBI" id="CHEBI:145989"/>
    </ligand>
</feature>
<feature type="binding site" evidence="1">
    <location>
        <position position="172"/>
    </location>
    <ligand>
        <name>3-phosphoshikimate</name>
        <dbReference type="ChEBI" id="CHEBI:145989"/>
    </ligand>
</feature>
<feature type="binding site" evidence="1">
    <location>
        <position position="173"/>
    </location>
    <ligand>
        <name>3-phosphoshikimate</name>
        <dbReference type="ChEBI" id="CHEBI:145989"/>
    </ligand>
</feature>
<feature type="binding site" evidence="1">
    <location>
        <position position="173"/>
    </location>
    <ligand>
        <name>phosphoenolpyruvate</name>
        <dbReference type="ChEBI" id="CHEBI:58702"/>
    </ligand>
</feature>
<feature type="binding site" evidence="1">
    <location>
        <position position="199"/>
    </location>
    <ligand>
        <name>3-phosphoshikimate</name>
        <dbReference type="ChEBI" id="CHEBI:145989"/>
    </ligand>
</feature>
<feature type="binding site" evidence="1">
    <location>
        <position position="316"/>
    </location>
    <ligand>
        <name>3-phosphoshikimate</name>
        <dbReference type="ChEBI" id="CHEBI:145989"/>
    </ligand>
</feature>
<feature type="binding site" evidence="1">
    <location>
        <position position="343"/>
    </location>
    <ligand>
        <name>3-phosphoshikimate</name>
        <dbReference type="ChEBI" id="CHEBI:145989"/>
    </ligand>
</feature>
<feature type="binding site" evidence="1">
    <location>
        <position position="347"/>
    </location>
    <ligand>
        <name>phosphoenolpyruvate</name>
        <dbReference type="ChEBI" id="CHEBI:58702"/>
    </ligand>
</feature>
<feature type="binding site" evidence="1">
    <location>
        <position position="390"/>
    </location>
    <ligand>
        <name>phosphoenolpyruvate</name>
        <dbReference type="ChEBI" id="CHEBI:58702"/>
    </ligand>
</feature>
<feature type="binding site" evidence="1">
    <location>
        <position position="416"/>
    </location>
    <ligand>
        <name>phosphoenolpyruvate</name>
        <dbReference type="ChEBI" id="CHEBI:58702"/>
    </ligand>
</feature>
<dbReference type="EC" id="2.5.1.19" evidence="1"/>
<dbReference type="EMBL" id="AE000513">
    <property type="protein sequence ID" value="AAF10666.1"/>
    <property type="status" value="ALT_INIT"/>
    <property type="molecule type" value="Genomic_DNA"/>
</dbReference>
<dbReference type="PIR" id="H75438">
    <property type="entry name" value="H75438"/>
</dbReference>
<dbReference type="RefSeq" id="NP_294820.1">
    <property type="nucleotide sequence ID" value="NC_001263.1"/>
</dbReference>
<dbReference type="RefSeq" id="WP_027479628.1">
    <property type="nucleotide sequence ID" value="NC_001263.1"/>
</dbReference>
<dbReference type="SMR" id="Q9RVD3"/>
<dbReference type="FunCoup" id="Q9RVD3">
    <property type="interactions" value="347"/>
</dbReference>
<dbReference type="STRING" id="243230.DR_1096"/>
<dbReference type="PaxDb" id="243230-DR_1096"/>
<dbReference type="EnsemblBacteria" id="AAF10666">
    <property type="protein sequence ID" value="AAF10666"/>
    <property type="gene ID" value="DR_1096"/>
</dbReference>
<dbReference type="GeneID" id="69517342"/>
<dbReference type="KEGG" id="dra:DR_1096"/>
<dbReference type="PATRIC" id="fig|243230.17.peg.1292"/>
<dbReference type="eggNOG" id="COG0128">
    <property type="taxonomic scope" value="Bacteria"/>
</dbReference>
<dbReference type="HOGENOM" id="CLU_024321_0_0_0"/>
<dbReference type="InParanoid" id="Q9RVD3"/>
<dbReference type="OrthoDB" id="9809920at2"/>
<dbReference type="UniPathway" id="UPA00053">
    <property type="reaction ID" value="UER00089"/>
</dbReference>
<dbReference type="Proteomes" id="UP000002524">
    <property type="component" value="Chromosome 1"/>
</dbReference>
<dbReference type="GO" id="GO:0005737">
    <property type="term" value="C:cytoplasm"/>
    <property type="evidence" value="ECO:0007669"/>
    <property type="project" value="UniProtKB-SubCell"/>
</dbReference>
<dbReference type="GO" id="GO:0003866">
    <property type="term" value="F:3-phosphoshikimate 1-carboxyvinyltransferase activity"/>
    <property type="evidence" value="ECO:0000318"/>
    <property type="project" value="GO_Central"/>
</dbReference>
<dbReference type="GO" id="GO:0008652">
    <property type="term" value="P:amino acid biosynthetic process"/>
    <property type="evidence" value="ECO:0007669"/>
    <property type="project" value="UniProtKB-KW"/>
</dbReference>
<dbReference type="GO" id="GO:0009073">
    <property type="term" value="P:aromatic amino acid family biosynthetic process"/>
    <property type="evidence" value="ECO:0007669"/>
    <property type="project" value="UniProtKB-KW"/>
</dbReference>
<dbReference type="GO" id="GO:0009423">
    <property type="term" value="P:chorismate biosynthetic process"/>
    <property type="evidence" value="ECO:0000318"/>
    <property type="project" value="GO_Central"/>
</dbReference>
<dbReference type="CDD" id="cd01556">
    <property type="entry name" value="EPSP_synthase"/>
    <property type="match status" value="1"/>
</dbReference>
<dbReference type="FunFam" id="3.65.10.10:FF:000010">
    <property type="entry name" value="3-phosphoshikimate 1-carboxyvinyltransferase"/>
    <property type="match status" value="1"/>
</dbReference>
<dbReference type="Gene3D" id="3.65.10.10">
    <property type="entry name" value="Enolpyruvate transferase domain"/>
    <property type="match status" value="2"/>
</dbReference>
<dbReference type="HAMAP" id="MF_00210">
    <property type="entry name" value="EPSP_synth"/>
    <property type="match status" value="1"/>
</dbReference>
<dbReference type="InterPro" id="IPR001986">
    <property type="entry name" value="Enolpyruvate_Tfrase_dom"/>
</dbReference>
<dbReference type="InterPro" id="IPR036968">
    <property type="entry name" value="Enolpyruvate_Tfrase_sf"/>
</dbReference>
<dbReference type="InterPro" id="IPR006264">
    <property type="entry name" value="EPSP_synthase"/>
</dbReference>
<dbReference type="InterPro" id="IPR023193">
    <property type="entry name" value="EPSP_synthase_CS"/>
</dbReference>
<dbReference type="InterPro" id="IPR013792">
    <property type="entry name" value="RNA3'P_cycl/enolpyr_Trfase_a/b"/>
</dbReference>
<dbReference type="NCBIfam" id="TIGR01356">
    <property type="entry name" value="aroA"/>
    <property type="match status" value="1"/>
</dbReference>
<dbReference type="PANTHER" id="PTHR21090">
    <property type="entry name" value="AROM/DEHYDROQUINATE SYNTHASE"/>
    <property type="match status" value="1"/>
</dbReference>
<dbReference type="PANTHER" id="PTHR21090:SF5">
    <property type="entry name" value="PENTAFUNCTIONAL AROM POLYPEPTIDE"/>
    <property type="match status" value="1"/>
</dbReference>
<dbReference type="Pfam" id="PF00275">
    <property type="entry name" value="EPSP_synthase"/>
    <property type="match status" value="1"/>
</dbReference>
<dbReference type="PIRSF" id="PIRSF000505">
    <property type="entry name" value="EPSPS"/>
    <property type="match status" value="1"/>
</dbReference>
<dbReference type="SUPFAM" id="SSF55205">
    <property type="entry name" value="EPT/RTPC-like"/>
    <property type="match status" value="1"/>
</dbReference>
<dbReference type="PROSITE" id="PS00104">
    <property type="entry name" value="EPSP_SYNTHASE_1"/>
    <property type="match status" value="1"/>
</dbReference>
<dbReference type="PROSITE" id="PS00885">
    <property type="entry name" value="EPSP_SYNTHASE_2"/>
    <property type="match status" value="1"/>
</dbReference>
<reference key="1">
    <citation type="journal article" date="1999" name="Science">
        <title>Genome sequence of the radioresistant bacterium Deinococcus radiodurans R1.</title>
        <authorList>
            <person name="White O."/>
            <person name="Eisen J.A."/>
            <person name="Heidelberg J.F."/>
            <person name="Hickey E.K."/>
            <person name="Peterson J.D."/>
            <person name="Dodson R.J."/>
            <person name="Haft D.H."/>
            <person name="Gwinn M.L."/>
            <person name="Nelson W.C."/>
            <person name="Richardson D.L."/>
            <person name="Moffat K.S."/>
            <person name="Qin H."/>
            <person name="Jiang L."/>
            <person name="Pamphile W."/>
            <person name="Crosby M."/>
            <person name="Shen M."/>
            <person name="Vamathevan J.J."/>
            <person name="Lam P."/>
            <person name="McDonald L.A."/>
            <person name="Utterback T.R."/>
            <person name="Zalewski C."/>
            <person name="Makarova K.S."/>
            <person name="Aravind L."/>
            <person name="Daly M.J."/>
            <person name="Minton K.W."/>
            <person name="Fleischmann R.D."/>
            <person name="Ketchum K.A."/>
            <person name="Nelson K.E."/>
            <person name="Salzberg S.L."/>
            <person name="Smith H.O."/>
            <person name="Venter J.C."/>
            <person name="Fraser C.M."/>
        </authorList>
    </citation>
    <scope>NUCLEOTIDE SEQUENCE [LARGE SCALE GENOMIC DNA]</scope>
    <source>
        <strain>ATCC 13939 / DSM 20539 / JCM 16871 / CCUG 27074 / LMG 4051 / NBRC 15346 / NCIMB 9279 / VKM B-1422 / R1</strain>
    </source>
</reference>
<comment type="function">
    <text evidence="1">Catalyzes the transfer of the enolpyruvyl moiety of phosphoenolpyruvate (PEP) to the 5-hydroxyl of shikimate-3-phosphate (S3P) to produce enolpyruvyl shikimate-3-phosphate and inorganic phosphate.</text>
</comment>
<comment type="catalytic activity">
    <reaction evidence="1">
        <text>3-phosphoshikimate + phosphoenolpyruvate = 5-O-(1-carboxyvinyl)-3-phosphoshikimate + phosphate</text>
        <dbReference type="Rhea" id="RHEA:21256"/>
        <dbReference type="ChEBI" id="CHEBI:43474"/>
        <dbReference type="ChEBI" id="CHEBI:57701"/>
        <dbReference type="ChEBI" id="CHEBI:58702"/>
        <dbReference type="ChEBI" id="CHEBI:145989"/>
        <dbReference type="EC" id="2.5.1.19"/>
    </reaction>
    <physiologicalReaction direction="left-to-right" evidence="1">
        <dbReference type="Rhea" id="RHEA:21257"/>
    </physiologicalReaction>
</comment>
<comment type="pathway">
    <text evidence="1">Metabolic intermediate biosynthesis; chorismate biosynthesis; chorismate from D-erythrose 4-phosphate and phosphoenolpyruvate: step 6/7.</text>
</comment>
<comment type="subunit">
    <text evidence="1">Monomer.</text>
</comment>
<comment type="subcellular location">
    <subcellularLocation>
        <location evidence="1">Cytoplasm</location>
    </subcellularLocation>
</comment>
<comment type="similarity">
    <text evidence="1 2">Belongs to the EPSP synthase family.</text>
</comment>
<comment type="sequence caution" evidence="2">
    <conflict type="erroneous initiation">
        <sequence resource="EMBL-CDS" id="AAF10666"/>
    </conflict>
    <text>Extended N-terminus.</text>
</comment>
<sequence>MSDALPATFDVIVHPARELRGELRAQPSKNYTTRYLLAAALAEGETRVVGVATSEDAEAMLRCLRDWGAGVELVGDDAVIRGFGARPQAGVTLNPGNAGAVARFLMGVAALTSGTTFVTDYPDSLGKRPQGDLLEALERLGAWVSSNDGRLPISVSGPVRGGTVEVSAERSSQYASALMFLGPLLPDGLELRLTGDIKSHAPLRQTLDTLSDFGVRATASDDLRRISIPGGQKYRPGRVLVPGDYPGSAAILTAAALLPGEVRLSNLREHDLQGEKEAVNVLREMGADIVREGDTLTVRGGRPLHAVTRDGDSFTDAVQALTAAAAFAEGDTTWENVATLRLKECDRISDTRAELERLGLRARETADSLSVTGSAHLAGGITADGHGDHRMIMLLTLLGLRADAPLRITGAHHIRKSYPQFFAHLEALGARFEYAEATA</sequence>
<accession>Q9RVD3</accession>
<keyword id="KW-0028">Amino-acid biosynthesis</keyword>
<keyword id="KW-0057">Aromatic amino acid biosynthesis</keyword>
<keyword id="KW-0963">Cytoplasm</keyword>
<keyword id="KW-1185">Reference proteome</keyword>
<keyword id="KW-0808">Transferase</keyword>